<keyword id="KW-0963">Cytoplasm</keyword>
<keyword id="KW-0418">Kinase</keyword>
<keyword id="KW-0479">Metal-binding</keyword>
<keyword id="KW-0597">Phosphoprotein</keyword>
<keyword id="KW-0598">Phosphotransferase system</keyword>
<keyword id="KW-1185">Reference proteome</keyword>
<keyword id="KW-0762">Sugar transport</keyword>
<keyword id="KW-0808">Transferase</keyword>
<keyword id="KW-0813">Transport</keyword>
<keyword id="KW-0862">Zinc</keyword>
<accession>Q9WXI7</accession>
<proteinExistence type="inferred from homology"/>
<reference key="1">
    <citation type="submission" date="1999-03" db="EMBL/GenBank/DDBJ databases">
        <title>Buchnera sp. DNA for ptsH-ptsI-crr operon.</title>
        <authorList>
            <person name="Matsumoto K."/>
            <person name="Morioka M."/>
            <person name="Ishikawa H."/>
        </authorList>
    </citation>
    <scope>NUCLEOTIDE SEQUENCE [GENOMIC DNA]</scope>
</reference>
<reference key="2">
    <citation type="journal article" date="2000" name="Nature">
        <title>Genome sequence of the endocellular bacterial symbiont of aphids Buchnera sp. APS.</title>
        <authorList>
            <person name="Shigenobu S."/>
            <person name="Watanabe H."/>
            <person name="Hattori M."/>
            <person name="Sakaki Y."/>
            <person name="Ishikawa H."/>
        </authorList>
    </citation>
    <scope>NUCLEOTIDE SEQUENCE [LARGE SCALE GENOMIC DNA]</scope>
    <source>
        <strain>APS</strain>
    </source>
</reference>
<sequence>MSFFSDFFNSKKTEIFAPLSGDIINIEDVPDPVFSKKIVGDGIAIKPSSNRILAPVNGTIGKIFETMHAFSIISEDNVELFIHFGIDTVKLKGEGFKKKAKDNQKVKIGDEIIILDLEFIKEKAESILTPVVISNIENFKKIKKSSGTIAAGQTVIITLYH</sequence>
<feature type="chain" id="PRO_0000186538" description="PTS system glucose-specific EIIA component">
    <location>
        <begin position="1"/>
        <end position="161"/>
    </location>
</feature>
<feature type="domain" description="PTS EIIA type-1" evidence="2">
    <location>
        <begin position="31"/>
        <end position="135"/>
    </location>
</feature>
<feature type="active site" description="Tele-phosphohistidine intermediate; for EIIA activity" evidence="1 2">
    <location>
        <position position="83"/>
    </location>
</feature>
<feature type="binding site" evidence="1 3">
    <location>
        <position position="68"/>
    </location>
    <ligand>
        <name>Zn(2+)</name>
        <dbReference type="ChEBI" id="CHEBI:29105"/>
    </ligand>
</feature>
<feature type="binding site" evidence="1 3">
    <location>
        <position position="83"/>
    </location>
    <ligand>
        <name>Zn(2+)</name>
        <dbReference type="ChEBI" id="CHEBI:29105"/>
    </ligand>
</feature>
<feature type="site" description="Important for phospho-donor activity" evidence="1">
    <location>
        <position position="68"/>
    </location>
</feature>
<feature type="modified residue" description="Phosphohistidine; by HPr" evidence="1">
    <location>
        <position position="83"/>
    </location>
</feature>
<dbReference type="EMBL" id="AB025229">
    <property type="protein sequence ID" value="BAA76880.1"/>
    <property type="molecule type" value="Genomic_DNA"/>
</dbReference>
<dbReference type="EMBL" id="BA000003">
    <property type="protein sequence ID" value="BAB12786.1"/>
    <property type="molecule type" value="Genomic_DNA"/>
</dbReference>
<dbReference type="RefSeq" id="NP_239900.1">
    <property type="nucleotide sequence ID" value="NC_002528.1"/>
</dbReference>
<dbReference type="RefSeq" id="WP_010895921.1">
    <property type="nucleotide sequence ID" value="NC_002528.1"/>
</dbReference>
<dbReference type="SMR" id="Q9WXI7"/>
<dbReference type="STRING" id="563178.BUAP5A_062"/>
<dbReference type="EnsemblBacteria" id="BAB12786">
    <property type="protein sequence ID" value="BAB12786"/>
    <property type="gene ID" value="BAB12786"/>
</dbReference>
<dbReference type="KEGG" id="buc:BU063"/>
<dbReference type="PATRIC" id="fig|107806.10.peg.72"/>
<dbReference type="eggNOG" id="COG2190">
    <property type="taxonomic scope" value="Bacteria"/>
</dbReference>
<dbReference type="HOGENOM" id="CLU_012312_5_1_6"/>
<dbReference type="Proteomes" id="UP000001806">
    <property type="component" value="Chromosome"/>
</dbReference>
<dbReference type="GO" id="GO:0005737">
    <property type="term" value="C:cytoplasm"/>
    <property type="evidence" value="ECO:0007669"/>
    <property type="project" value="UniProtKB-SubCell"/>
</dbReference>
<dbReference type="GO" id="GO:0016301">
    <property type="term" value="F:kinase activity"/>
    <property type="evidence" value="ECO:0007669"/>
    <property type="project" value="UniProtKB-KW"/>
</dbReference>
<dbReference type="GO" id="GO:0046872">
    <property type="term" value="F:metal ion binding"/>
    <property type="evidence" value="ECO:0007669"/>
    <property type="project" value="UniProtKB-KW"/>
</dbReference>
<dbReference type="GO" id="GO:0009401">
    <property type="term" value="P:phosphoenolpyruvate-dependent sugar phosphotransferase system"/>
    <property type="evidence" value="ECO:0007669"/>
    <property type="project" value="UniProtKB-KW"/>
</dbReference>
<dbReference type="FunFam" id="2.70.70.10:FF:000001">
    <property type="entry name" value="PTS system glucose-specific IIA component"/>
    <property type="match status" value="1"/>
</dbReference>
<dbReference type="Gene3D" id="2.70.70.10">
    <property type="entry name" value="Glucose Permease (Domain IIA)"/>
    <property type="match status" value="1"/>
</dbReference>
<dbReference type="InterPro" id="IPR011055">
    <property type="entry name" value="Dup_hybrid_motif"/>
</dbReference>
<dbReference type="InterPro" id="IPR001127">
    <property type="entry name" value="PTS_EIIA_1_perm"/>
</dbReference>
<dbReference type="InterPro" id="IPR050890">
    <property type="entry name" value="PTS_EIIA_component"/>
</dbReference>
<dbReference type="NCBIfam" id="NF006962">
    <property type="entry name" value="PRK09439.1"/>
    <property type="match status" value="1"/>
</dbReference>
<dbReference type="NCBIfam" id="TIGR00830">
    <property type="entry name" value="PTBA"/>
    <property type="match status" value="1"/>
</dbReference>
<dbReference type="PANTHER" id="PTHR45008">
    <property type="entry name" value="PTS SYSTEM GLUCOSE-SPECIFIC EIIA COMPONENT"/>
    <property type="match status" value="1"/>
</dbReference>
<dbReference type="PANTHER" id="PTHR45008:SF1">
    <property type="entry name" value="PTS SYSTEM GLUCOSE-SPECIFIC EIIA COMPONENT"/>
    <property type="match status" value="1"/>
</dbReference>
<dbReference type="Pfam" id="PF00358">
    <property type="entry name" value="PTS_EIIA_1"/>
    <property type="match status" value="1"/>
</dbReference>
<dbReference type="SUPFAM" id="SSF51261">
    <property type="entry name" value="Duplicated hybrid motif"/>
    <property type="match status" value="1"/>
</dbReference>
<dbReference type="PROSITE" id="PS51093">
    <property type="entry name" value="PTS_EIIA_TYPE_1"/>
    <property type="match status" value="1"/>
</dbReference>
<gene>
    <name type="primary">crr</name>
    <name type="ordered locus">BU063</name>
</gene>
<organism>
    <name type="scientific">Buchnera aphidicola subsp. Acyrthosiphon pisum (strain APS)</name>
    <name type="common">Acyrthosiphon pisum symbiotic bacterium</name>
    <dbReference type="NCBI Taxonomy" id="107806"/>
    <lineage>
        <taxon>Bacteria</taxon>
        <taxon>Pseudomonadati</taxon>
        <taxon>Pseudomonadota</taxon>
        <taxon>Gammaproteobacteria</taxon>
        <taxon>Enterobacterales</taxon>
        <taxon>Erwiniaceae</taxon>
        <taxon>Buchnera</taxon>
    </lineage>
</organism>
<protein>
    <recommendedName>
        <fullName evidence="1">PTS system glucose-specific EIIA component</fullName>
    </recommendedName>
    <alternativeName>
        <fullName evidence="1">EIIA-Glc</fullName>
    </alternativeName>
    <alternativeName>
        <fullName evidence="1">EIII-Glc</fullName>
    </alternativeName>
    <alternativeName>
        <fullName evidence="1">Glucose-specific phosphotransferase enzyme IIA component</fullName>
    </alternativeName>
</protein>
<name>PTGA_BUCAI</name>
<evidence type="ECO:0000250" key="1">
    <source>
        <dbReference type="UniProtKB" id="P69783"/>
    </source>
</evidence>
<evidence type="ECO:0000255" key="2">
    <source>
        <dbReference type="PROSITE-ProRule" id="PRU00416"/>
    </source>
</evidence>
<evidence type="ECO:0000305" key="3"/>
<comment type="function">
    <text evidence="1">The phosphoenolpyruvate-dependent sugar phosphotransferase system (sugar PTS), a major carbohydrate active transport system, catalyzes the phosphorylation of incoming sugar substrates concomitantly with their translocation across the cell membrane. The enzyme II complex composed of PtsG and Crr is involved in glucose transport.</text>
</comment>
<comment type="cofactor">
    <cofactor evidence="1">
        <name>Zn(2+)</name>
        <dbReference type="ChEBI" id="CHEBI:29105"/>
    </cofactor>
</comment>
<comment type="subcellular location">
    <subcellularLocation>
        <location evidence="3">Cytoplasm</location>
    </subcellularLocation>
</comment>
<comment type="domain">
    <text evidence="2">The EIIA domain is phosphorylated by phospho-HPr on a histidyl residue. Then, it transfers the phosphoryl group to the EIIB domain.</text>
</comment>